<sequence length="120" mass="13767">MSYRKLGRTSSQRKAMLRDLTTDLIINERIETTETRAKELRSVVEKMITLGKRGDLHARRQAAAYIRNEVANEENNQDALQKLFSDIATRYEERQGGYTRIMKLGPRRGDGAPMAIIELV</sequence>
<keyword id="KW-0687">Ribonucleoprotein</keyword>
<keyword id="KW-0689">Ribosomal protein</keyword>
<accession>A7Z0R6</accession>
<evidence type="ECO:0000255" key="1">
    <source>
        <dbReference type="HAMAP-Rule" id="MF_01368"/>
    </source>
</evidence>
<evidence type="ECO:0000305" key="2"/>
<organism>
    <name type="scientific">Bacillus velezensis (strain DSM 23117 / BGSC 10A6 / LMG 26770 / FZB42)</name>
    <name type="common">Bacillus amyloliquefaciens subsp. plantarum</name>
    <dbReference type="NCBI Taxonomy" id="326423"/>
    <lineage>
        <taxon>Bacteria</taxon>
        <taxon>Bacillati</taxon>
        <taxon>Bacillota</taxon>
        <taxon>Bacilli</taxon>
        <taxon>Bacillales</taxon>
        <taxon>Bacillaceae</taxon>
        <taxon>Bacillus</taxon>
        <taxon>Bacillus amyloliquefaciens group</taxon>
    </lineage>
</organism>
<proteinExistence type="inferred from homology"/>
<name>RL17_BACVZ</name>
<comment type="subunit">
    <text evidence="1">Part of the 50S ribosomal subunit. Contacts protein L32.</text>
</comment>
<comment type="similarity">
    <text evidence="1">Belongs to the bacterial ribosomal protein bL17 family.</text>
</comment>
<feature type="chain" id="PRO_1000055768" description="Large ribosomal subunit protein bL17">
    <location>
        <begin position="1"/>
        <end position="120"/>
    </location>
</feature>
<gene>
    <name evidence="1" type="primary">rplQ</name>
    <name type="ordered locus">RBAM_001690</name>
</gene>
<reference key="1">
    <citation type="journal article" date="2007" name="Nat. Biotechnol.">
        <title>Comparative analysis of the complete genome sequence of the plant growth-promoting bacterium Bacillus amyloliquefaciens FZB42.</title>
        <authorList>
            <person name="Chen X.H."/>
            <person name="Koumoutsi A."/>
            <person name="Scholz R."/>
            <person name="Eisenreich A."/>
            <person name="Schneider K."/>
            <person name="Heinemeyer I."/>
            <person name="Morgenstern B."/>
            <person name="Voss B."/>
            <person name="Hess W.R."/>
            <person name="Reva O."/>
            <person name="Junge H."/>
            <person name="Voigt B."/>
            <person name="Jungblut P.R."/>
            <person name="Vater J."/>
            <person name="Suessmuth R."/>
            <person name="Liesegang H."/>
            <person name="Strittmatter A."/>
            <person name="Gottschalk G."/>
            <person name="Borriss R."/>
        </authorList>
    </citation>
    <scope>NUCLEOTIDE SEQUENCE [LARGE SCALE GENOMIC DNA]</scope>
    <source>
        <strain>DSM 23117 / BGSC 10A6 / LMG 26770 / FZB42</strain>
    </source>
</reference>
<dbReference type="EMBL" id="CP000560">
    <property type="protein sequence ID" value="ABS72592.1"/>
    <property type="molecule type" value="Genomic_DNA"/>
</dbReference>
<dbReference type="RefSeq" id="WP_003156550.1">
    <property type="nucleotide sequence ID" value="NC_009725.2"/>
</dbReference>
<dbReference type="SMR" id="A7Z0R6"/>
<dbReference type="GeneID" id="93079308"/>
<dbReference type="KEGG" id="bay:RBAM_001690"/>
<dbReference type="HOGENOM" id="CLU_074407_2_2_9"/>
<dbReference type="Proteomes" id="UP000001120">
    <property type="component" value="Chromosome"/>
</dbReference>
<dbReference type="GO" id="GO:0022625">
    <property type="term" value="C:cytosolic large ribosomal subunit"/>
    <property type="evidence" value="ECO:0007669"/>
    <property type="project" value="TreeGrafter"/>
</dbReference>
<dbReference type="GO" id="GO:0003735">
    <property type="term" value="F:structural constituent of ribosome"/>
    <property type="evidence" value="ECO:0007669"/>
    <property type="project" value="InterPro"/>
</dbReference>
<dbReference type="GO" id="GO:0006412">
    <property type="term" value="P:translation"/>
    <property type="evidence" value="ECO:0007669"/>
    <property type="project" value="UniProtKB-UniRule"/>
</dbReference>
<dbReference type="FunFam" id="3.90.1030.10:FF:000002">
    <property type="entry name" value="50S ribosomal protein L17"/>
    <property type="match status" value="1"/>
</dbReference>
<dbReference type="Gene3D" id="3.90.1030.10">
    <property type="entry name" value="Ribosomal protein L17"/>
    <property type="match status" value="1"/>
</dbReference>
<dbReference type="HAMAP" id="MF_01368">
    <property type="entry name" value="Ribosomal_bL17"/>
    <property type="match status" value="1"/>
</dbReference>
<dbReference type="InterPro" id="IPR000456">
    <property type="entry name" value="Ribosomal_bL17"/>
</dbReference>
<dbReference type="InterPro" id="IPR047859">
    <property type="entry name" value="Ribosomal_bL17_CS"/>
</dbReference>
<dbReference type="InterPro" id="IPR036373">
    <property type="entry name" value="Ribosomal_bL17_sf"/>
</dbReference>
<dbReference type="NCBIfam" id="TIGR00059">
    <property type="entry name" value="L17"/>
    <property type="match status" value="1"/>
</dbReference>
<dbReference type="PANTHER" id="PTHR14413:SF16">
    <property type="entry name" value="LARGE RIBOSOMAL SUBUNIT PROTEIN BL17M"/>
    <property type="match status" value="1"/>
</dbReference>
<dbReference type="PANTHER" id="PTHR14413">
    <property type="entry name" value="RIBOSOMAL PROTEIN L17"/>
    <property type="match status" value="1"/>
</dbReference>
<dbReference type="Pfam" id="PF01196">
    <property type="entry name" value="Ribosomal_L17"/>
    <property type="match status" value="1"/>
</dbReference>
<dbReference type="SUPFAM" id="SSF64263">
    <property type="entry name" value="Prokaryotic ribosomal protein L17"/>
    <property type="match status" value="1"/>
</dbReference>
<dbReference type="PROSITE" id="PS01167">
    <property type="entry name" value="RIBOSOMAL_L17"/>
    <property type="match status" value="1"/>
</dbReference>
<protein>
    <recommendedName>
        <fullName evidence="1">Large ribosomal subunit protein bL17</fullName>
    </recommendedName>
    <alternativeName>
        <fullName evidence="2">50S ribosomal protein L17</fullName>
    </alternativeName>
</protein>